<proteinExistence type="inferred from homology"/>
<accession>Q8K9U2</accession>
<organism>
    <name type="scientific">Buchnera aphidicola subsp. Schizaphis graminum (strain Sg)</name>
    <dbReference type="NCBI Taxonomy" id="198804"/>
    <lineage>
        <taxon>Bacteria</taxon>
        <taxon>Pseudomonadati</taxon>
        <taxon>Pseudomonadota</taxon>
        <taxon>Gammaproteobacteria</taxon>
        <taxon>Enterobacterales</taxon>
        <taxon>Erwiniaceae</taxon>
        <taxon>Buchnera</taxon>
    </lineage>
</organism>
<comment type="function">
    <text evidence="1">Specifically hydrolyzes both 8-oxo-deoxyguanosine triphosphate (8-oxo-dGTP) and 8-oxo-guanosine triphosphate (8-oxo-GTP) to the related monophosphates, thereby cleaning up the nucleotide pools and preventing misincorporation of 8-oxoGua into DNA and RNA. It prevents replicational errors by removing an oxidatively damaged form of guanine (8-oxo-dGTP) from DNA and the nucleotide pool. 8-oxo-dGTP can be inserted opposite dA and dC residues of template DNA with almost equal efficiency thus leading to A.T to G.C transversions.</text>
</comment>
<comment type="catalytic activity">
    <reaction evidence="1">
        <text>8-oxo-dGTP + H2O = 8-oxo-dGMP + diphosphate + H(+)</text>
        <dbReference type="Rhea" id="RHEA:31575"/>
        <dbReference type="ChEBI" id="CHEBI:15377"/>
        <dbReference type="ChEBI" id="CHEBI:15378"/>
        <dbReference type="ChEBI" id="CHEBI:33019"/>
        <dbReference type="ChEBI" id="CHEBI:63224"/>
        <dbReference type="ChEBI" id="CHEBI:77896"/>
        <dbReference type="EC" id="3.6.1.55"/>
    </reaction>
</comment>
<comment type="catalytic activity">
    <reaction evidence="1">
        <text>8-oxo-GTP + H2O = 8-oxo-GMP + diphosphate + H(+)</text>
        <dbReference type="Rhea" id="RHEA:67616"/>
        <dbReference type="ChEBI" id="CHEBI:15377"/>
        <dbReference type="ChEBI" id="CHEBI:15378"/>
        <dbReference type="ChEBI" id="CHEBI:33019"/>
        <dbReference type="ChEBI" id="CHEBI:143553"/>
        <dbReference type="ChEBI" id="CHEBI:145694"/>
    </reaction>
</comment>
<comment type="cofactor">
    <cofactor evidence="1">
        <name>Mg(2+)</name>
        <dbReference type="ChEBI" id="CHEBI:18420"/>
    </cofactor>
</comment>
<comment type="similarity">
    <text evidence="3">Belongs to the Nudix hydrolase family.</text>
</comment>
<keyword id="KW-0227">DNA damage</keyword>
<keyword id="KW-0234">DNA repair</keyword>
<keyword id="KW-0235">DNA replication</keyword>
<keyword id="KW-0378">Hydrolase</keyword>
<keyword id="KW-0460">Magnesium</keyword>
<keyword id="KW-0479">Metal-binding</keyword>
<keyword id="KW-0515">Mutator protein</keyword>
<name>MUTT_BUCAP</name>
<reference key="1">
    <citation type="journal article" date="2002" name="Science">
        <title>50 million years of genomic stasis in endosymbiotic bacteria.</title>
        <authorList>
            <person name="Tamas I."/>
            <person name="Klasson L."/>
            <person name="Canbaeck B."/>
            <person name="Naeslund A.K."/>
            <person name="Eriksson A.-S."/>
            <person name="Wernegreen J.J."/>
            <person name="Sandstroem J.P."/>
            <person name="Moran N.A."/>
            <person name="Andersson S.G.E."/>
        </authorList>
    </citation>
    <scope>NUCLEOTIDE SEQUENCE [LARGE SCALE GENOMIC DNA]</scope>
    <source>
        <strain>Sg</strain>
    </source>
</reference>
<gene>
    <name type="primary">mutT</name>
    <name type="ordered locus">BUsg_196</name>
</gene>
<feature type="chain" id="PRO_0000056945" description="8-oxo-dGTP diphosphatase">
    <location>
        <begin position="1"/>
        <end position="130"/>
    </location>
</feature>
<feature type="domain" description="Nudix hydrolase" evidence="2">
    <location>
        <begin position="1"/>
        <end position="128"/>
    </location>
</feature>
<feature type="short sequence motif" description="Nudix box" evidence="2">
    <location>
        <begin position="37"/>
        <end position="58"/>
    </location>
</feature>
<feature type="binding site" evidence="1">
    <location>
        <position position="36"/>
    </location>
    <ligand>
        <name>Mg(2+)</name>
        <dbReference type="ChEBI" id="CHEBI:18420"/>
    </ligand>
</feature>
<feature type="binding site" evidence="1">
    <location>
        <position position="56"/>
    </location>
    <ligand>
        <name>Mg(2+)</name>
        <dbReference type="ChEBI" id="CHEBI:18420"/>
    </ligand>
</feature>
<evidence type="ECO:0000250" key="1">
    <source>
        <dbReference type="UniProtKB" id="P08337"/>
    </source>
</evidence>
<evidence type="ECO:0000255" key="2">
    <source>
        <dbReference type="PROSITE-ProRule" id="PRU00794"/>
    </source>
</evidence>
<evidence type="ECO:0000305" key="3"/>
<dbReference type="EC" id="3.6.1.55" evidence="1"/>
<dbReference type="EMBL" id="AE013218">
    <property type="protein sequence ID" value="AAM67760.1"/>
    <property type="molecule type" value="Genomic_DNA"/>
</dbReference>
<dbReference type="RefSeq" id="WP_011053727.1">
    <property type="nucleotide sequence ID" value="NC_004061.1"/>
</dbReference>
<dbReference type="SMR" id="Q8K9U2"/>
<dbReference type="STRING" id="198804.BUsg_196"/>
<dbReference type="GeneID" id="93003663"/>
<dbReference type="KEGG" id="bas:BUsg_196"/>
<dbReference type="eggNOG" id="COG0494">
    <property type="taxonomic scope" value="Bacteria"/>
</dbReference>
<dbReference type="HOGENOM" id="CLU_037162_19_2_6"/>
<dbReference type="Proteomes" id="UP000000416">
    <property type="component" value="Chromosome"/>
</dbReference>
<dbReference type="GO" id="GO:0035539">
    <property type="term" value="F:8-oxo-7,8-dihydrodeoxyguanosine triphosphate pyrophosphatase activity"/>
    <property type="evidence" value="ECO:0007669"/>
    <property type="project" value="UniProtKB-EC"/>
</dbReference>
<dbReference type="GO" id="GO:0008413">
    <property type="term" value="F:8-oxo-7,8-dihydroguanosine triphosphate pyrophosphatase activity"/>
    <property type="evidence" value="ECO:0007669"/>
    <property type="project" value="TreeGrafter"/>
</dbReference>
<dbReference type="GO" id="GO:0044715">
    <property type="term" value="F:8-oxo-dGDP phosphatase activity"/>
    <property type="evidence" value="ECO:0007669"/>
    <property type="project" value="TreeGrafter"/>
</dbReference>
<dbReference type="GO" id="GO:0044716">
    <property type="term" value="F:8-oxo-GDP phosphatase activity"/>
    <property type="evidence" value="ECO:0007669"/>
    <property type="project" value="TreeGrafter"/>
</dbReference>
<dbReference type="GO" id="GO:0046872">
    <property type="term" value="F:metal ion binding"/>
    <property type="evidence" value="ECO:0007669"/>
    <property type="project" value="UniProtKB-KW"/>
</dbReference>
<dbReference type="GO" id="GO:0006281">
    <property type="term" value="P:DNA repair"/>
    <property type="evidence" value="ECO:0007669"/>
    <property type="project" value="UniProtKB-KW"/>
</dbReference>
<dbReference type="GO" id="GO:0006260">
    <property type="term" value="P:DNA replication"/>
    <property type="evidence" value="ECO:0007669"/>
    <property type="project" value="UniProtKB-KW"/>
</dbReference>
<dbReference type="Gene3D" id="3.90.79.10">
    <property type="entry name" value="Nucleoside Triphosphate Pyrophosphohydrolase"/>
    <property type="match status" value="1"/>
</dbReference>
<dbReference type="InterPro" id="IPR047127">
    <property type="entry name" value="MutT-like"/>
</dbReference>
<dbReference type="InterPro" id="IPR020476">
    <property type="entry name" value="Nudix_hydrolase"/>
</dbReference>
<dbReference type="InterPro" id="IPR015797">
    <property type="entry name" value="NUDIX_hydrolase-like_dom_sf"/>
</dbReference>
<dbReference type="InterPro" id="IPR000086">
    <property type="entry name" value="NUDIX_hydrolase_dom"/>
</dbReference>
<dbReference type="PANTHER" id="PTHR47707">
    <property type="entry name" value="8-OXO-DGTP DIPHOSPHATASE"/>
    <property type="match status" value="1"/>
</dbReference>
<dbReference type="PANTHER" id="PTHR47707:SF1">
    <property type="entry name" value="NUDIX HYDROLASE FAMILY PROTEIN"/>
    <property type="match status" value="1"/>
</dbReference>
<dbReference type="Pfam" id="PF00293">
    <property type="entry name" value="NUDIX"/>
    <property type="match status" value="1"/>
</dbReference>
<dbReference type="PRINTS" id="PR00502">
    <property type="entry name" value="NUDIXFAMILY"/>
</dbReference>
<dbReference type="SUPFAM" id="SSF55811">
    <property type="entry name" value="Nudix"/>
    <property type="match status" value="1"/>
</dbReference>
<dbReference type="PROSITE" id="PS51462">
    <property type="entry name" value="NUDIX"/>
    <property type="match status" value="1"/>
</dbReference>
<protein>
    <recommendedName>
        <fullName>8-oxo-dGTP diphosphatase</fullName>
        <shortName>8-oxo-dGTPase</shortName>
        <ecNumber evidence="1">3.6.1.55</ecNumber>
    </recommendedName>
    <alternativeName>
        <fullName>7,8-dihydro-8-oxoguanine-triphosphatase</fullName>
    </alternativeName>
    <alternativeName>
        <fullName>Mutator protein MutT</fullName>
    </alternativeName>
    <alternativeName>
        <fullName>dGTP pyrophosphohydrolase</fullName>
    </alternativeName>
</protein>
<sequence length="130" mass="16090">MKYTNIVIGIIIKKNKIYITKARKKKYVLDLWEFPGGKVKENENLTYSLKRELSEEVGLKILRFRFFRCIKYFYKKIKLYFFLITRWKGRIYSKEGYLYKWIFLDDLKYFNFPSPNSHIIHDLQKMIFFK</sequence>